<accession>Q9X5U8</accession>
<sequence>MTDITMRQLLEAGVHFGHQTRYWNPKMAPYIYGARQKIHIINLEETLPAFRDALKFVKEVASKRGKVLFVGTKFAAREIVKEEATRCGMPYVDYRWLGGMLTNYKTIRQSIKRLKELEERLENEENLVGMTKKEILNLMREKEKLSANLAGIKNMGSLPDVLFVIDVEHERNAVQEANRLGITVLGIVDTNASPDNIDHVIPGNDDAIRAIRLYCKAIADTIIDARSVLELQKDEEAKEEKTKAKTTAKKVVTKKAKVAEKAQAAAEKKSEKPTTEKRPTKEAAETKETSEEPKTKEVQQPIEASKAEAEEGK</sequence>
<comment type="similarity">
    <text evidence="2">Belongs to the universal ribosomal protein uS2 family.</text>
</comment>
<comment type="sequence caution" evidence="2">
    <conflict type="erroneous initiation">
        <sequence resource="EMBL-CDS" id="AAO90889"/>
    </conflict>
</comment>
<feature type="chain" id="PRO_0000134162" description="Small ribosomal subunit protein uS2">
    <location>
        <begin position="1"/>
        <end position="313"/>
    </location>
</feature>
<feature type="region of interest" description="Disordered" evidence="1">
    <location>
        <begin position="234"/>
        <end position="313"/>
    </location>
</feature>
<feature type="compositionally biased region" description="Basic and acidic residues" evidence="1">
    <location>
        <begin position="234"/>
        <end position="243"/>
    </location>
</feature>
<feature type="compositionally biased region" description="Basic residues" evidence="1">
    <location>
        <begin position="244"/>
        <end position="256"/>
    </location>
</feature>
<feature type="compositionally biased region" description="Basic and acidic residues" evidence="1">
    <location>
        <begin position="266"/>
        <end position="297"/>
    </location>
</feature>
<reference key="1">
    <citation type="journal article" date="1999" name="Infect. Immun.">
        <title>Differential expression of translational elements by life cycle variants of Coxiella burnetii.</title>
        <authorList>
            <person name="Seshadri R."/>
            <person name="Hendrix L.R."/>
            <person name="Samuel J.E."/>
        </authorList>
    </citation>
    <scope>NUCLEOTIDE SEQUENCE [GENOMIC DNA]</scope>
    <source>
        <strain>RSA 493 / Nine Mile phase I</strain>
    </source>
</reference>
<reference key="2">
    <citation type="journal article" date="2003" name="Proc. Natl. Acad. Sci. U.S.A.">
        <title>Complete genome sequence of the Q-fever pathogen, Coxiella burnetii.</title>
        <authorList>
            <person name="Seshadri R."/>
            <person name="Paulsen I.T."/>
            <person name="Eisen J.A."/>
            <person name="Read T.D."/>
            <person name="Nelson K.E."/>
            <person name="Nelson W.C."/>
            <person name="Ward N.L."/>
            <person name="Tettelin H."/>
            <person name="Davidsen T.M."/>
            <person name="Beanan M.J."/>
            <person name="DeBoy R.T."/>
            <person name="Daugherty S.C."/>
            <person name="Brinkac L.M."/>
            <person name="Madupu R."/>
            <person name="Dodson R.J."/>
            <person name="Khouri H.M."/>
            <person name="Lee K.H."/>
            <person name="Carty H.A."/>
            <person name="Scanlan D."/>
            <person name="Heinzen R.A."/>
            <person name="Thompson H.A."/>
            <person name="Samuel J.E."/>
            <person name="Fraser C.M."/>
            <person name="Heidelberg J.F."/>
        </authorList>
    </citation>
    <scope>NUCLEOTIDE SEQUENCE [LARGE SCALE GENOMIC DNA]</scope>
    <source>
        <strain>RSA 493 / Nine Mile phase I</strain>
    </source>
</reference>
<proteinExistence type="inferred from homology"/>
<evidence type="ECO:0000256" key="1">
    <source>
        <dbReference type="SAM" id="MobiDB-lite"/>
    </source>
</evidence>
<evidence type="ECO:0000305" key="2"/>
<name>RS2_COXBU</name>
<gene>
    <name type="primary">rpsB</name>
    <name type="ordered locus">CBU_1386</name>
</gene>
<organism>
    <name type="scientific">Coxiella burnetii (strain RSA 493 / Nine Mile phase I)</name>
    <dbReference type="NCBI Taxonomy" id="227377"/>
    <lineage>
        <taxon>Bacteria</taxon>
        <taxon>Pseudomonadati</taxon>
        <taxon>Pseudomonadota</taxon>
        <taxon>Gammaproteobacteria</taxon>
        <taxon>Legionellales</taxon>
        <taxon>Coxiellaceae</taxon>
        <taxon>Coxiella</taxon>
    </lineage>
</organism>
<dbReference type="EMBL" id="AF127534">
    <property type="protein sequence ID" value="AAD33342.1"/>
    <property type="molecule type" value="Genomic_DNA"/>
</dbReference>
<dbReference type="EMBL" id="AE016828">
    <property type="protein sequence ID" value="AAO90889.2"/>
    <property type="status" value="ALT_INIT"/>
    <property type="molecule type" value="Genomic_DNA"/>
</dbReference>
<dbReference type="RefSeq" id="NP_820375.2">
    <property type="nucleotide sequence ID" value="NC_002971.3"/>
</dbReference>
<dbReference type="RefSeq" id="WP_010958193.1">
    <property type="nucleotide sequence ID" value="NC_002971.4"/>
</dbReference>
<dbReference type="SMR" id="Q9X5U8"/>
<dbReference type="STRING" id="227377.CBU_1386"/>
<dbReference type="EnsemblBacteria" id="AAO90889">
    <property type="protein sequence ID" value="AAO90889"/>
    <property type="gene ID" value="CBU_1386"/>
</dbReference>
<dbReference type="GeneID" id="1209292"/>
<dbReference type="KEGG" id="cbu:CBU_1386"/>
<dbReference type="PATRIC" id="fig|227377.7.peg.1382"/>
<dbReference type="eggNOG" id="COG0052">
    <property type="taxonomic scope" value="Bacteria"/>
</dbReference>
<dbReference type="HOGENOM" id="CLU_040318_2_0_6"/>
<dbReference type="OrthoDB" id="9808036at2"/>
<dbReference type="Proteomes" id="UP000002671">
    <property type="component" value="Chromosome"/>
</dbReference>
<dbReference type="GO" id="GO:0022627">
    <property type="term" value="C:cytosolic small ribosomal subunit"/>
    <property type="evidence" value="ECO:0000318"/>
    <property type="project" value="GO_Central"/>
</dbReference>
<dbReference type="GO" id="GO:0003735">
    <property type="term" value="F:structural constituent of ribosome"/>
    <property type="evidence" value="ECO:0000318"/>
    <property type="project" value="GO_Central"/>
</dbReference>
<dbReference type="GO" id="GO:0006412">
    <property type="term" value="P:translation"/>
    <property type="evidence" value="ECO:0007669"/>
    <property type="project" value="UniProtKB-UniRule"/>
</dbReference>
<dbReference type="CDD" id="cd01425">
    <property type="entry name" value="RPS2"/>
    <property type="match status" value="1"/>
</dbReference>
<dbReference type="Gene3D" id="3.40.50.10490">
    <property type="entry name" value="Glucose-6-phosphate isomerase like protein, domain 1"/>
    <property type="match status" value="1"/>
</dbReference>
<dbReference type="Gene3D" id="1.10.287.610">
    <property type="entry name" value="Helix hairpin bin"/>
    <property type="match status" value="1"/>
</dbReference>
<dbReference type="HAMAP" id="MF_00291_B">
    <property type="entry name" value="Ribosomal_uS2_B"/>
    <property type="match status" value="1"/>
</dbReference>
<dbReference type="InterPro" id="IPR001865">
    <property type="entry name" value="Ribosomal_uS2"/>
</dbReference>
<dbReference type="InterPro" id="IPR005706">
    <property type="entry name" value="Ribosomal_uS2_bac/mit/plastid"/>
</dbReference>
<dbReference type="InterPro" id="IPR018130">
    <property type="entry name" value="Ribosomal_uS2_CS"/>
</dbReference>
<dbReference type="InterPro" id="IPR023591">
    <property type="entry name" value="Ribosomal_uS2_flav_dom_sf"/>
</dbReference>
<dbReference type="NCBIfam" id="TIGR01011">
    <property type="entry name" value="rpsB_bact"/>
    <property type="match status" value="1"/>
</dbReference>
<dbReference type="PANTHER" id="PTHR12534">
    <property type="entry name" value="30S RIBOSOMAL PROTEIN S2 PROKARYOTIC AND ORGANELLAR"/>
    <property type="match status" value="1"/>
</dbReference>
<dbReference type="PANTHER" id="PTHR12534:SF0">
    <property type="entry name" value="SMALL RIBOSOMAL SUBUNIT PROTEIN US2M"/>
    <property type="match status" value="1"/>
</dbReference>
<dbReference type="Pfam" id="PF00318">
    <property type="entry name" value="Ribosomal_S2"/>
    <property type="match status" value="1"/>
</dbReference>
<dbReference type="PRINTS" id="PR00395">
    <property type="entry name" value="RIBOSOMALS2"/>
</dbReference>
<dbReference type="SUPFAM" id="SSF52313">
    <property type="entry name" value="Ribosomal protein S2"/>
    <property type="match status" value="1"/>
</dbReference>
<dbReference type="PROSITE" id="PS00962">
    <property type="entry name" value="RIBOSOMAL_S2_1"/>
    <property type="match status" value="1"/>
</dbReference>
<keyword id="KW-1185">Reference proteome</keyword>
<keyword id="KW-0687">Ribonucleoprotein</keyword>
<keyword id="KW-0689">Ribosomal protein</keyword>
<protein>
    <recommendedName>
        <fullName evidence="2">Small ribosomal subunit protein uS2</fullName>
    </recommendedName>
    <alternativeName>
        <fullName>30S ribosomal protein S2</fullName>
    </alternativeName>
</protein>